<accession>Q46DZ7</accession>
<name>AROD_METBF</name>
<feature type="chain" id="PRO_1000043171" description="3-dehydroquinate dehydratase">
    <location>
        <begin position="1"/>
        <end position="242"/>
    </location>
</feature>
<feature type="active site" description="Proton donor/acceptor" evidence="1">
    <location>
        <position position="135"/>
    </location>
</feature>
<feature type="active site" description="Schiff-base intermediate with substrate" evidence="1">
    <location>
        <position position="162"/>
    </location>
</feature>
<feature type="binding site" evidence="1">
    <location>
        <begin position="39"/>
        <end position="41"/>
    </location>
    <ligand>
        <name>3-dehydroquinate</name>
        <dbReference type="ChEBI" id="CHEBI:32364"/>
    </ligand>
</feature>
<feature type="binding site" evidence="1">
    <location>
        <position position="73"/>
    </location>
    <ligand>
        <name>3-dehydroquinate</name>
        <dbReference type="ChEBI" id="CHEBI:32364"/>
    </ligand>
</feature>
<feature type="binding site" evidence="1">
    <location>
        <position position="203"/>
    </location>
    <ligand>
        <name>3-dehydroquinate</name>
        <dbReference type="ChEBI" id="CHEBI:32364"/>
    </ligand>
</feature>
<feature type="binding site" evidence="1">
    <location>
        <position position="228"/>
    </location>
    <ligand>
        <name>3-dehydroquinate</name>
        <dbReference type="ChEBI" id="CHEBI:32364"/>
    </ligand>
</feature>
<gene>
    <name evidence="1" type="primary">aroD</name>
    <name type="ordered locus">Mbar_A0922</name>
</gene>
<sequence length="242" mass="26245">MIHIGQLDLEKKAAVVAVILEKSLEISRKAAKMGADLLEIRLDLLGIRDLETAAETIRKVKSETGLPVILTNRSITEGGKWEGKEADRIELLTNLISLKDGPDAVDIELSAGREARDQVIKAAKAHGKTVIVSSHDFSRTPAFQEMKTILEEAFLAGADIAKLAVMPQSRRDVLNLLRVALDAREAGNAVCTIAMGRLGKHTRVIAPFYGSVLTYAAVNSEVSAAPGQFQVDEVKKILELLE</sequence>
<proteinExistence type="inferred from homology"/>
<reference key="1">
    <citation type="journal article" date="2006" name="J. Bacteriol.">
        <title>The Methanosarcina barkeri genome: comparative analysis with Methanosarcina acetivorans and Methanosarcina mazei reveals extensive rearrangement within methanosarcinal genomes.</title>
        <authorList>
            <person name="Maeder D.L."/>
            <person name="Anderson I."/>
            <person name="Brettin T.S."/>
            <person name="Bruce D.C."/>
            <person name="Gilna P."/>
            <person name="Han C.S."/>
            <person name="Lapidus A."/>
            <person name="Metcalf W.W."/>
            <person name="Saunders E."/>
            <person name="Tapia R."/>
            <person name="Sowers K.R."/>
        </authorList>
    </citation>
    <scope>NUCLEOTIDE SEQUENCE [LARGE SCALE GENOMIC DNA]</scope>
    <source>
        <strain>Fusaro / DSM 804</strain>
    </source>
</reference>
<organism>
    <name type="scientific">Methanosarcina barkeri (strain Fusaro / DSM 804)</name>
    <dbReference type="NCBI Taxonomy" id="269797"/>
    <lineage>
        <taxon>Archaea</taxon>
        <taxon>Methanobacteriati</taxon>
        <taxon>Methanobacteriota</taxon>
        <taxon>Stenosarchaea group</taxon>
        <taxon>Methanomicrobia</taxon>
        <taxon>Methanosarcinales</taxon>
        <taxon>Methanosarcinaceae</taxon>
        <taxon>Methanosarcina</taxon>
    </lineage>
</organism>
<comment type="function">
    <text evidence="1">Involved in the third step of the chorismate pathway, which leads to the biosynthesis of aromatic amino acids. Catalyzes the cis-dehydration of 3-dehydroquinate (DHQ) and introduces the first double bond of the aromatic ring to yield 3-dehydroshikimate.</text>
</comment>
<comment type="catalytic activity">
    <reaction evidence="1">
        <text>3-dehydroquinate = 3-dehydroshikimate + H2O</text>
        <dbReference type="Rhea" id="RHEA:21096"/>
        <dbReference type="ChEBI" id="CHEBI:15377"/>
        <dbReference type="ChEBI" id="CHEBI:16630"/>
        <dbReference type="ChEBI" id="CHEBI:32364"/>
        <dbReference type="EC" id="4.2.1.10"/>
    </reaction>
</comment>
<comment type="pathway">
    <text evidence="1">Metabolic intermediate biosynthesis; chorismate biosynthesis; chorismate from D-erythrose 4-phosphate and phosphoenolpyruvate: step 3/7.</text>
</comment>
<comment type="subunit">
    <text evidence="1">Homodimer.</text>
</comment>
<comment type="similarity">
    <text evidence="1">Belongs to the type-I 3-dehydroquinase family.</text>
</comment>
<evidence type="ECO:0000255" key="1">
    <source>
        <dbReference type="HAMAP-Rule" id="MF_00214"/>
    </source>
</evidence>
<protein>
    <recommendedName>
        <fullName evidence="1">3-dehydroquinate dehydratase</fullName>
        <shortName evidence="1">3-dehydroquinase</shortName>
        <ecNumber evidence="1">4.2.1.10</ecNumber>
    </recommendedName>
    <alternativeName>
        <fullName evidence="1">Type I DHQase</fullName>
    </alternativeName>
    <alternativeName>
        <fullName evidence="1">Type I dehydroquinase</fullName>
        <shortName evidence="1">DHQ1</shortName>
    </alternativeName>
</protein>
<keyword id="KW-0028">Amino-acid biosynthesis</keyword>
<keyword id="KW-0057">Aromatic amino acid biosynthesis</keyword>
<keyword id="KW-0456">Lyase</keyword>
<keyword id="KW-0704">Schiff base</keyword>
<dbReference type="EC" id="4.2.1.10" evidence="1"/>
<dbReference type="EMBL" id="CP000099">
    <property type="protein sequence ID" value="AAZ69895.1"/>
    <property type="molecule type" value="Genomic_DNA"/>
</dbReference>
<dbReference type="SMR" id="Q46DZ7"/>
<dbReference type="STRING" id="269797.Mbar_A0922"/>
<dbReference type="PaxDb" id="269797-Mbar_A0922"/>
<dbReference type="KEGG" id="mba:Mbar_A0922"/>
<dbReference type="eggNOG" id="arCOG02097">
    <property type="taxonomic scope" value="Archaea"/>
</dbReference>
<dbReference type="HOGENOM" id="CLU_064444_2_1_2"/>
<dbReference type="OrthoDB" id="34329at2157"/>
<dbReference type="UniPathway" id="UPA00053">
    <property type="reaction ID" value="UER00086"/>
</dbReference>
<dbReference type="GO" id="GO:0003855">
    <property type="term" value="F:3-dehydroquinate dehydratase activity"/>
    <property type="evidence" value="ECO:0007669"/>
    <property type="project" value="UniProtKB-UniRule"/>
</dbReference>
<dbReference type="GO" id="GO:0046279">
    <property type="term" value="P:3,4-dihydroxybenzoate biosynthetic process"/>
    <property type="evidence" value="ECO:0007669"/>
    <property type="project" value="TreeGrafter"/>
</dbReference>
<dbReference type="GO" id="GO:0008652">
    <property type="term" value="P:amino acid biosynthetic process"/>
    <property type="evidence" value="ECO:0007669"/>
    <property type="project" value="UniProtKB-KW"/>
</dbReference>
<dbReference type="GO" id="GO:0009073">
    <property type="term" value="P:aromatic amino acid family biosynthetic process"/>
    <property type="evidence" value="ECO:0007669"/>
    <property type="project" value="UniProtKB-KW"/>
</dbReference>
<dbReference type="GO" id="GO:0009423">
    <property type="term" value="P:chorismate biosynthetic process"/>
    <property type="evidence" value="ECO:0007669"/>
    <property type="project" value="UniProtKB-UniRule"/>
</dbReference>
<dbReference type="CDD" id="cd00502">
    <property type="entry name" value="DHQase_I"/>
    <property type="match status" value="1"/>
</dbReference>
<dbReference type="FunFam" id="3.20.20.70:FF:000290">
    <property type="entry name" value="3-dehydroquinate dehydratase"/>
    <property type="match status" value="1"/>
</dbReference>
<dbReference type="Gene3D" id="3.20.20.70">
    <property type="entry name" value="Aldolase class I"/>
    <property type="match status" value="1"/>
</dbReference>
<dbReference type="HAMAP" id="MF_00214">
    <property type="entry name" value="AroD"/>
    <property type="match status" value="1"/>
</dbReference>
<dbReference type="InterPro" id="IPR013785">
    <property type="entry name" value="Aldolase_TIM"/>
</dbReference>
<dbReference type="InterPro" id="IPR001381">
    <property type="entry name" value="DHquinase_I"/>
</dbReference>
<dbReference type="InterPro" id="IPR050146">
    <property type="entry name" value="Type-I_3-dehydroquinase"/>
</dbReference>
<dbReference type="NCBIfam" id="TIGR01093">
    <property type="entry name" value="aroD"/>
    <property type="match status" value="1"/>
</dbReference>
<dbReference type="PANTHER" id="PTHR43699">
    <property type="entry name" value="3-DEHYDROQUINATE DEHYDRATASE"/>
    <property type="match status" value="1"/>
</dbReference>
<dbReference type="PANTHER" id="PTHR43699:SF1">
    <property type="entry name" value="3-DEHYDROQUINATE DEHYDRATASE"/>
    <property type="match status" value="1"/>
</dbReference>
<dbReference type="Pfam" id="PF01487">
    <property type="entry name" value="DHquinase_I"/>
    <property type="match status" value="1"/>
</dbReference>
<dbReference type="SUPFAM" id="SSF51569">
    <property type="entry name" value="Aldolase"/>
    <property type="match status" value="1"/>
</dbReference>